<dbReference type="EC" id="2.7.8.26" evidence="1"/>
<dbReference type="EMBL" id="CP000851">
    <property type="protein sequence ID" value="ABV88693.1"/>
    <property type="molecule type" value="Genomic_DNA"/>
</dbReference>
<dbReference type="RefSeq" id="WP_012156592.1">
    <property type="nucleotide sequence ID" value="NC_009901.1"/>
</dbReference>
<dbReference type="STRING" id="398579.Spea_3379"/>
<dbReference type="KEGG" id="spl:Spea_3379"/>
<dbReference type="eggNOG" id="COG0368">
    <property type="taxonomic scope" value="Bacteria"/>
</dbReference>
<dbReference type="HOGENOM" id="CLU_057426_1_1_6"/>
<dbReference type="OrthoDB" id="9794626at2"/>
<dbReference type="UniPathway" id="UPA00148">
    <property type="reaction ID" value="UER00238"/>
</dbReference>
<dbReference type="Proteomes" id="UP000002608">
    <property type="component" value="Chromosome"/>
</dbReference>
<dbReference type="GO" id="GO:0005886">
    <property type="term" value="C:plasma membrane"/>
    <property type="evidence" value="ECO:0007669"/>
    <property type="project" value="UniProtKB-SubCell"/>
</dbReference>
<dbReference type="GO" id="GO:0051073">
    <property type="term" value="F:adenosylcobinamide-GDP ribazoletransferase activity"/>
    <property type="evidence" value="ECO:0007669"/>
    <property type="project" value="UniProtKB-UniRule"/>
</dbReference>
<dbReference type="GO" id="GO:0008818">
    <property type="term" value="F:cobalamin 5'-phosphate synthase activity"/>
    <property type="evidence" value="ECO:0007669"/>
    <property type="project" value="UniProtKB-UniRule"/>
</dbReference>
<dbReference type="GO" id="GO:0009236">
    <property type="term" value="P:cobalamin biosynthetic process"/>
    <property type="evidence" value="ECO:0007669"/>
    <property type="project" value="UniProtKB-UniRule"/>
</dbReference>
<dbReference type="HAMAP" id="MF_00719">
    <property type="entry name" value="CobS"/>
    <property type="match status" value="1"/>
</dbReference>
<dbReference type="InterPro" id="IPR003805">
    <property type="entry name" value="CobS"/>
</dbReference>
<dbReference type="NCBIfam" id="TIGR00317">
    <property type="entry name" value="cobS"/>
    <property type="match status" value="1"/>
</dbReference>
<dbReference type="NCBIfam" id="NF001277">
    <property type="entry name" value="PRK00235.1-3"/>
    <property type="match status" value="1"/>
</dbReference>
<dbReference type="PANTHER" id="PTHR34148">
    <property type="entry name" value="ADENOSYLCOBINAMIDE-GDP RIBAZOLETRANSFERASE"/>
    <property type="match status" value="1"/>
</dbReference>
<dbReference type="PANTHER" id="PTHR34148:SF1">
    <property type="entry name" value="ADENOSYLCOBINAMIDE-GDP RIBAZOLETRANSFERASE"/>
    <property type="match status" value="1"/>
</dbReference>
<dbReference type="Pfam" id="PF02654">
    <property type="entry name" value="CobS"/>
    <property type="match status" value="1"/>
</dbReference>
<name>COBS_SHEPA</name>
<keyword id="KW-0997">Cell inner membrane</keyword>
<keyword id="KW-1003">Cell membrane</keyword>
<keyword id="KW-0169">Cobalamin biosynthesis</keyword>
<keyword id="KW-0460">Magnesium</keyword>
<keyword id="KW-0472">Membrane</keyword>
<keyword id="KW-1185">Reference proteome</keyword>
<keyword id="KW-0808">Transferase</keyword>
<keyword id="KW-0812">Transmembrane</keyword>
<keyword id="KW-1133">Transmembrane helix</keyword>
<gene>
    <name evidence="1" type="primary">cobS</name>
    <name type="ordered locus">Spea_3379</name>
</gene>
<proteinExistence type="inferred from homology"/>
<accession>A8H806</accession>
<organism>
    <name type="scientific">Shewanella pealeana (strain ATCC 700345 / ANG-SQ1)</name>
    <dbReference type="NCBI Taxonomy" id="398579"/>
    <lineage>
        <taxon>Bacteria</taxon>
        <taxon>Pseudomonadati</taxon>
        <taxon>Pseudomonadota</taxon>
        <taxon>Gammaproteobacteria</taxon>
        <taxon>Alteromonadales</taxon>
        <taxon>Shewanellaceae</taxon>
        <taxon>Shewanella</taxon>
    </lineage>
</organism>
<feature type="chain" id="PRO_1000083269" description="Adenosylcobinamide-GDP ribazoletransferase">
    <location>
        <begin position="1"/>
        <end position="259"/>
    </location>
</feature>
<feature type="transmembrane region" description="Helical" evidence="1">
    <location>
        <begin position="9"/>
        <end position="29"/>
    </location>
</feature>
<feature type="transmembrane region" description="Helical" evidence="1">
    <location>
        <begin position="43"/>
        <end position="63"/>
    </location>
</feature>
<feature type="transmembrane region" description="Helical" evidence="1">
    <location>
        <begin position="64"/>
        <end position="84"/>
    </location>
</feature>
<feature type="transmembrane region" description="Helical" evidence="1">
    <location>
        <begin position="118"/>
        <end position="138"/>
    </location>
</feature>
<feature type="transmembrane region" description="Helical" evidence="1">
    <location>
        <begin position="143"/>
        <end position="163"/>
    </location>
</feature>
<feature type="transmembrane region" description="Helical" evidence="1">
    <location>
        <begin position="190"/>
        <end position="210"/>
    </location>
</feature>
<comment type="function">
    <text evidence="1">Joins adenosylcobinamide-GDP and alpha-ribazole to generate adenosylcobalamin (Ado-cobalamin). Also synthesizes adenosylcobalamin 5'-phosphate from adenosylcobinamide-GDP and alpha-ribazole 5'-phosphate.</text>
</comment>
<comment type="catalytic activity">
    <reaction evidence="1">
        <text>alpha-ribazole + adenosylcob(III)inamide-GDP = adenosylcob(III)alamin + GMP + H(+)</text>
        <dbReference type="Rhea" id="RHEA:16049"/>
        <dbReference type="ChEBI" id="CHEBI:10329"/>
        <dbReference type="ChEBI" id="CHEBI:15378"/>
        <dbReference type="ChEBI" id="CHEBI:18408"/>
        <dbReference type="ChEBI" id="CHEBI:58115"/>
        <dbReference type="ChEBI" id="CHEBI:60487"/>
        <dbReference type="EC" id="2.7.8.26"/>
    </reaction>
</comment>
<comment type="catalytic activity">
    <reaction evidence="1">
        <text>alpha-ribazole 5'-phosphate + adenosylcob(III)inamide-GDP = adenosylcob(III)alamin 5'-phosphate + GMP + H(+)</text>
        <dbReference type="Rhea" id="RHEA:23560"/>
        <dbReference type="ChEBI" id="CHEBI:15378"/>
        <dbReference type="ChEBI" id="CHEBI:57918"/>
        <dbReference type="ChEBI" id="CHEBI:58115"/>
        <dbReference type="ChEBI" id="CHEBI:60487"/>
        <dbReference type="ChEBI" id="CHEBI:60493"/>
        <dbReference type="EC" id="2.7.8.26"/>
    </reaction>
</comment>
<comment type="cofactor">
    <cofactor evidence="1">
        <name>Mg(2+)</name>
        <dbReference type="ChEBI" id="CHEBI:18420"/>
    </cofactor>
</comment>
<comment type="pathway">
    <text evidence="1">Cofactor biosynthesis; adenosylcobalamin biosynthesis; adenosylcobalamin from cob(II)yrinate a,c-diamide: step 7/7.</text>
</comment>
<comment type="subcellular location">
    <subcellularLocation>
        <location evidence="1">Cell inner membrane</location>
        <topology evidence="1">Multi-pass membrane protein</topology>
    </subcellularLocation>
</comment>
<comment type="similarity">
    <text evidence="1">Belongs to the CobS family.</text>
</comment>
<protein>
    <recommendedName>
        <fullName evidence="1">Adenosylcobinamide-GDP ribazoletransferase</fullName>
        <ecNumber evidence="1">2.7.8.26</ecNumber>
    </recommendedName>
    <alternativeName>
        <fullName evidence="1">Cobalamin synthase</fullName>
    </alternativeName>
    <alternativeName>
        <fullName evidence="1">Cobalamin-5'-phosphate synthase</fullName>
    </alternativeName>
</protein>
<sequence length="259" mass="27896">MQAWQQQLNLFFIAMGFFTRIPMPKWIEVDADKLNKASRYFGLVGLLVGAISALVYTLMLYWVSPSIAIVLAMITSVLVTGGFHEDGLADTADGLGGGWTVEAKLNIMKDSRLGSYGALALVLALLLKWQLLTELALFDPSSVSLALIVGHCLSRVVAASFIFSEPYVSDSDTSKSKPLAQEQGINELSILLATGILALLLVGVMQALVLTLALTIVRYGFVRLFTKQIGGYTGDTLGAAQQGSELTCYLLLLVLGVSW</sequence>
<reference key="1">
    <citation type="submission" date="2007-10" db="EMBL/GenBank/DDBJ databases">
        <title>Complete sequence of Shewanella pealeana ATCC 700345.</title>
        <authorList>
            <consortium name="US DOE Joint Genome Institute"/>
            <person name="Copeland A."/>
            <person name="Lucas S."/>
            <person name="Lapidus A."/>
            <person name="Barry K."/>
            <person name="Glavina del Rio T."/>
            <person name="Dalin E."/>
            <person name="Tice H."/>
            <person name="Pitluck S."/>
            <person name="Chertkov O."/>
            <person name="Brettin T."/>
            <person name="Bruce D."/>
            <person name="Detter J.C."/>
            <person name="Han C."/>
            <person name="Schmutz J."/>
            <person name="Larimer F."/>
            <person name="Land M."/>
            <person name="Hauser L."/>
            <person name="Kyrpides N."/>
            <person name="Kim E."/>
            <person name="Zhao J.-S.Z."/>
            <person name="Manno D."/>
            <person name="Hawari J."/>
            <person name="Richardson P."/>
        </authorList>
    </citation>
    <scope>NUCLEOTIDE SEQUENCE [LARGE SCALE GENOMIC DNA]</scope>
    <source>
        <strain>ATCC 700345 / ANG-SQ1</strain>
    </source>
</reference>
<evidence type="ECO:0000255" key="1">
    <source>
        <dbReference type="HAMAP-Rule" id="MF_00719"/>
    </source>
</evidence>